<reference key="1">
    <citation type="journal article" date="1995" name="J. Mol. Biol.">
        <title>The DNA sequence of equine herpesvirus 2.</title>
        <authorList>
            <person name="Telford E.A.R."/>
            <person name="Watson M.S."/>
            <person name="Aird H.C."/>
            <person name="Perry J."/>
            <person name="Davison A.J."/>
        </authorList>
    </citation>
    <scope>NUCLEOTIDE SEQUENCE [LARGE SCALE GENOMIC DNA]</scope>
</reference>
<name>VG36_EHV2</name>
<dbReference type="EMBL" id="U20824">
    <property type="protein sequence ID" value="AAC13824.1"/>
    <property type="molecule type" value="Genomic_DNA"/>
</dbReference>
<dbReference type="PIR" id="S55631">
    <property type="entry name" value="S55631"/>
</dbReference>
<dbReference type="KEGG" id="vg:1461032"/>
<dbReference type="Proteomes" id="UP000007083">
    <property type="component" value="Segment"/>
</dbReference>
<dbReference type="GO" id="GO:0005524">
    <property type="term" value="F:ATP binding"/>
    <property type="evidence" value="ECO:0007669"/>
    <property type="project" value="InterPro"/>
</dbReference>
<dbReference type="GO" id="GO:0004672">
    <property type="term" value="F:protein kinase activity"/>
    <property type="evidence" value="ECO:0007669"/>
    <property type="project" value="InterPro"/>
</dbReference>
<dbReference type="Gene3D" id="1.10.510.10">
    <property type="entry name" value="Transferase(Phosphotransferase) domain 1"/>
    <property type="match status" value="1"/>
</dbReference>
<dbReference type="InterPro" id="IPR011009">
    <property type="entry name" value="Kinase-like_dom_sf"/>
</dbReference>
<dbReference type="InterPro" id="IPR000719">
    <property type="entry name" value="Prot_kinase_dom"/>
</dbReference>
<dbReference type="InterPro" id="IPR008266">
    <property type="entry name" value="Tyr_kinase_AS"/>
</dbReference>
<dbReference type="SMART" id="SM00220">
    <property type="entry name" value="S_TKc"/>
    <property type="match status" value="1"/>
</dbReference>
<dbReference type="SUPFAM" id="SSF56112">
    <property type="entry name" value="Protein kinase-like (PK-like)"/>
    <property type="match status" value="1"/>
</dbReference>
<dbReference type="PROSITE" id="PS50011">
    <property type="entry name" value="PROTEIN_KINASE_DOM"/>
    <property type="match status" value="1"/>
</dbReference>
<dbReference type="PROSITE" id="PS00109">
    <property type="entry name" value="PROTEIN_KINASE_TYR"/>
    <property type="match status" value="1"/>
</dbReference>
<gene>
    <name type="primary">36</name>
</gene>
<organismHost>
    <name type="scientific">Equus caballus</name>
    <name type="common">Horse</name>
    <dbReference type="NCBI Taxonomy" id="9796"/>
</organismHost>
<accession>Q66640</accession>
<sequence>MTQSREVLNLLTLQTPSPSGGPRPCRRYQLRTPREGCGTVMEMMVAQRDHLRVSHVSPFAVSLQAPDRWERCRHGAPRFRLALGKGEYGRVEAVSKHECVKTFNEVVAFYHELVVCDLIEIARLRSRCPEKSEGLISFVDACMPCKQLFFPRYSCSLNDFSHWGPENIPPLVAGFESLLDAVVFLNEECGLFHSDISPCNILVERAQTETGLGKLVLTDMGLATPHTGNPQTGVSFVSSGGTQLYQMFVDRGPFMVSKDAYKPACVLLRCFRVAAALNWGEVKTDRFPICQQMSRVIDVSCLGYCLLNVIERILDVTKAEPTNRFYSRCSFTELQPQYFLKCLVHKVVLLEFLADLWKVEGGGLSIGVSSGAEFDSERLSLSERQDFRSWCRQLDTRYICTLYPYSNLLEGCEGLRDCLVNLLSLDYFSPFGRKSLES</sequence>
<feature type="chain" id="PRO_0000405988" description="Probable inactive protein kinase 38">
    <location>
        <begin position="1"/>
        <end position="438"/>
    </location>
</feature>
<feature type="domain" description="Protein kinase" evidence="1">
    <location>
        <begin position="77"/>
        <end position="340"/>
    </location>
</feature>
<comment type="domain">
    <text>The protein kinase domain is predicted to be catalytically inactive.</text>
</comment>
<comment type="similarity">
    <text evidence="1">Belongs to the protein kinase superfamily. Tyr protein kinase family.</text>
</comment>
<protein>
    <recommendedName>
        <fullName>Probable inactive protein kinase 38</fullName>
    </recommendedName>
</protein>
<proteinExistence type="inferred from homology"/>
<organism>
    <name type="scientific">Equine herpesvirus 2 (strain 86/87)</name>
    <name type="common">EHV-2</name>
    <dbReference type="NCBI Taxonomy" id="82831"/>
    <lineage>
        <taxon>Viruses</taxon>
        <taxon>Duplodnaviria</taxon>
        <taxon>Heunggongvirae</taxon>
        <taxon>Peploviricota</taxon>
        <taxon>Herviviricetes</taxon>
        <taxon>Herpesvirales</taxon>
        <taxon>Orthoherpesviridae</taxon>
        <taxon>Gammaherpesvirinae</taxon>
        <taxon>Percavirus</taxon>
        <taxon>Percavirus equidgamma2</taxon>
        <taxon>Equid gammaherpesvirus 2</taxon>
    </lineage>
</organism>
<keyword id="KW-1185">Reference proteome</keyword>
<evidence type="ECO:0000255" key="1">
    <source>
        <dbReference type="PROSITE-ProRule" id="PRU00159"/>
    </source>
</evidence>